<sequence>MGTADVYEQHKNQEEDMLTTERLKKGYQVPVTHYELQSLIFNASENKLLRLDRAPRRTYCMISSIVHRRGEYHMNFDSNRKVAKGEMPRFAKIRFKRILEDRVKFFSALFRGTPLQYLQKKVPYYRRKELLLLEFYDYQIRYDRAIWCVKLVSILGFNCSAKAQKKALLDLATLEWSQACGKVTYYLLLALRKTYKKSRAAFRESVKMWYYMTRFMMYMFQDGVVDKHEFLNDLTEMFNVFFIRGSLANAKILELFMEYYIFFLDDLSSSLILARRASSLLCKALGLLSEINEAYTKTQVYKNENKHEFMGHQDVWTIDAQPKFDFEDYNRDHKEFIDPDDFFRFVDELPDAAYFEDYEDKTAEQVAEEELQTMEAPRRARNYIYSALKSVKTPVNDQIPVDLGDELYIPSDVESLTSPEPEEDPEEGPEEDPRSQSVPSPTFPAGPVSMEEAIPAYWRARGPVLQTVPQPAPQPVPKPVQQTVPKPVPRPPPRNLNIKSEQVDPEYEKNFGNPVKSKNFNINIKAEPMDYDEYSTEPPQPLQPPQTFQQRPKSPEKEKAPEPAAEPPRWTLEELPKNFLSKNLEVPAPWTRPRENPIERKRAYNLLCAKRFPVKEDVFEPFKDPDSPDGSRPASPIEPIPVKKLHKTPPKKVMTDDDEFGHIPAQKRKINPKLANGKYSETLFVYYLINGGVAFDPKHDGDEMDFSNPTPPEAPPPPPPVEFETSPSASPAPDTDKEDEDGKSKEGGDKAAEKSTDKPAEEKEASEKEKTGEKKDGDKPTEEKSKKGEKADGKKAVDEHLNDLIIPMDVEAEAATKRNSATNSKDDEAEDANKVAGDAPVVEATHAAGTSEKKPEAEVTPIETNDVEMESVDPATNKESTSDSTAEKSSDSQEPMEVDDPQKKLPSPAADKAGDDASKKTKEGKKPDTPAIELVDLEALDDIPLPTDDLMLPEEDEIQVIEKPKHPDADFCEVVEVVEKDKDKTPEKATEGEKEAEKDAEKLPEPAPVVESVPEPVKTPEKPKTPEPPRLYTAEEIEQLKKDKRRQRMLDRLTDAFKIQMESDKKYEENNIHPSFKVYDQSRSFRRPLHLLSSMVQYLAFRTPESFVWNNLEVPRPDKCHKILPQLCGSPLDHLPCELHELPVMEGNDGHVEHLRLRHHEIVRRSQAADENWLPGGADVLQYGRIIDACVDVIGLMDCINVERPNSIFKVSERLFNFREKFAKEEALLRIKLMFKWCISEEREGSFRPVYCARMLEYGLNRSDDGLIGGWQIMDLFFNFMATEGPKPGMANYQAKFDACAGIMIEMIRHKLFTVADILRELEKDLDIDYTLPLMARQRKQKMPKISKKEKTPEEPDNTKLIHFTTEHTPKRLFMGRKMDLLERMIIMLPQFGNNKDSDEYKIRNQLLFGLRPSENIYFRRAKTICQGICKEFDSKSYIEFNDYVTAHKKLNQSRLDDILRQFRAQTYHDQHVILEKIVIHLTENIGSFLEKKNGHLPAPEVVNIICEMYEYSMDITSIFDFFEVLHPYLKAVDEKVASFEMDLVPDMYHTEIAYIFVSFFMKHYQRFLLHKRNNHIVNQLYYSVRKMMMDKTRFITCWGRVIAIFVNHIRPVLIDGCFRIIHIEGNEREFARAHPNKRPFNLECSYFNEEFAGSKLSLRGATMRYDSFADMKWIVDNLKVTVKRKNSKPRTPNRYSFVIRAFMEARKHGQNFDRINELANYCANVTANDPPLSEYWIGAIKGLCCLCIDDSSQLFKEMAKKIDISDCSTHYSLSTFITCLAGKAAFYIPRLLHKLTEEVFSQMLHNDGRLTSHKTKDVKRKSANKTTETRTLSEAEPGVCLSLLIIAGLCCPGDEPFGLSVHYRGIEKKKKRFRQTADERIMHMFHWLEMDKSMFRTLASISKLLEALQSRCRDANLVLPQSFQLKHPIVDPNHPPPHEKAPYRPQFLFNIAKAVFFTICEQDWVTIRMYQFVRINKMEPFNQEKLKTNCLGQQLLRISLRRKTERSNVHSLFEAHKISKKATVDKVLSFMNLWNFRATLFDLMLMIKEISPDGNTRHAQQGAIAADALMSEIGKCCRDMFLAAYKADAKMPNVKKLMDFRFGDISKYWLLAPLVRMCPKPINIPPQYANTQVQTVAAKFLREASALMDTPPTTTPKERLLQCSWAMSKLPFINMILTCLACEKTQSGKDTFLNSVYQQLQREVFRDHNKRSNWTNRPEHRDCTVLRVNLIAYMYKEILKPTHVEVWGLLLYQLMFHGIINPSRERYVFENCYDMLQHMVLWTLVNGDNMNSHDRYGSIRVRWPNYAGLMKKIRKEIQDRHVHPSRTCLLRFLPIGKLQTSTISYKKYHKRTIRPSATKSKKFMSNEGIRSGKYVYLPEEKVKTNAYDHMKNIPDGIQKGGWKFRMFQTTRLDKVAKSALHQLRAKIPHTHIGEFKRPCNIMLDNMSEDFYLRPPEVEITKTVEPVADDEETAAVKKPEEETAEKKKDEAKKADEKTTKADDEKKKDETADAKKDNEKQKEEKDKPEDSAKAKTDDVTAKDTEKDTAAPTDAAKAAAAPVAAAPDANKEMDTSTPKPAPVTRETSTTRGRGGGRKRNSGGRAAGGSRAKRTNSRANANAETAAAAETSSTTKAGPSGGGSSNYHAAMRANQPPMSNGSSDETKANIRNLLNRKQEKRNSLADANAAAAVAAAAAAAAAAAGNIAPALAPIVQPGIPSAGASSTMPGVPPQQQPHPGMQHQSGMQHQGMGAGMGGMNPTMHAPPPYSSSSMNPFANQPHFAAPNQVPITNMAHRSTAAVTPEERKRIMEEQMHQKLAQQQLLIENQNRQREAREREAREHQERLHKIREEQMQKEAKIREEQMQLERQRAIEENNRIMEEQRILREKEEARRRMEEEQRRREEEARLAYHVEQERIRKEQERQAILEAERLKREEERERERQRLEQERLQREMEEKARREKEEQARIERERLERERVAREALAAQQAQQAQQAQQAQQAQQQRHRAMLEQQQRQQMINQQQQQQAPYGQQPPQGQPPSYQQSSYQNPSGYQQGQQSGQNQPPNYQQTSHTNPAIQQTQQPPAYQQDNAQMHMQNRQQQPGQQYGNQPQQQQSQQAQQGQYPQQYPQQLSQNQQMNQQNQQRNPFGAQPEMQIGGPKVLMQAKPDEAHAQQYQHTQAQLALSQMEKEKQYLKAKNLQAGQAAGQQQPRFGENPQQNAPGFNGNLPYPQQQQQQPQQPGTSQIPNTTPTRPANPMQGQQQQAGMQNYQNQPVLGQPGPMQPGGQAGQQQQNQFQRQGMHTTPTKNDMAMRQGQMGGQMGQQQGQMGQQMQNRPAQGLNQQSQGFQQQGGQQSAQASFNQPQNQFSGGQQQQQMGQNQGQNLQQGQNQFGRQAAPNQENFQQQPGFNQNAAGQNYQRPEQQQQSQNQWNQLNQQMRPQQPQQPSQQQQNLPFGRTEQSQQFQQQQQQPQHQQQNKPAMGQQGFNYQGQQQGQGFDQSSQQTQQHPNPHQQQGHMQQTHQQNASQQQQQYNQAQQQSQQQGNQFPGFSGSSNQARASNILNQSMEDAGLNQGFSSGNTSNQQASSTNQQGNYGMQQGQQNPMHGQMHHQQGQQNQNQQQRPGMGQQGMGQQGMGQQGGMGQSGRGQPGMGGQSAMGQHQHGMGRPTMGQPGMQQSGMQQQHGMQQQQPGAQQSGLQQAGMQQQHGGIGMGGMQQQGRNNYGSMGQQGQQSGQQQAQQHQQMSQQAQPRQMPGGGVQLPPYSMGQQQQTQQQQPNQQQMDHLRRQQQMQQMARQQAMQQQQQGGVQQGQPQMQGYGNQGQQQQQQFPQMQQHRGQGQQGHGMGGAGQQHQQVPQQQQNQYFQPQQQQDQRMQQQPGGQQQQQQGQSGQQQNNQHYNNMGQFPNQQQY</sequence>
<organism>
    <name type="scientific">Caenorhabditis briggsae</name>
    <dbReference type="NCBI Taxonomy" id="6238"/>
    <lineage>
        <taxon>Eukaryota</taxon>
        <taxon>Metazoa</taxon>
        <taxon>Ecdysozoa</taxon>
        <taxon>Nematoda</taxon>
        <taxon>Chromadorea</taxon>
        <taxon>Rhabditida</taxon>
        <taxon>Rhabditina</taxon>
        <taxon>Rhabditomorpha</taxon>
        <taxon>Rhabditoidea</taxon>
        <taxon>Rhabditidae</taxon>
        <taxon>Peloderinae</taxon>
        <taxon>Caenorhabditis</taxon>
    </lineage>
</organism>
<keyword id="KW-0010">Activator</keyword>
<keyword id="KW-0175">Coiled coil</keyword>
<keyword id="KW-0539">Nucleus</keyword>
<keyword id="KW-1185">Reference proteome</keyword>
<keyword id="KW-0678">Repressor</keyword>
<keyword id="KW-0804">Transcription</keyword>
<keyword id="KW-0805">Transcription regulation</keyword>
<name>MED12_CAEBR</name>
<proteinExistence type="inferred from homology"/>
<feature type="chain" id="PRO_0000312961" description="Mediator of RNA polymerase II transcription subunit 12">
    <location>
        <begin position="1"/>
        <end position="3902"/>
    </location>
</feature>
<feature type="region of interest" description="Disordered" evidence="3">
    <location>
        <begin position="414"/>
        <end position="576"/>
    </location>
</feature>
<feature type="region of interest" description="Disordered" evidence="3">
    <location>
        <begin position="619"/>
        <end position="674"/>
    </location>
</feature>
<feature type="region of interest" description="Disordered" evidence="3">
    <location>
        <begin position="694"/>
        <end position="940"/>
    </location>
</feature>
<feature type="region of interest" description="Disordered" evidence="3">
    <location>
        <begin position="977"/>
        <end position="1029"/>
    </location>
</feature>
<feature type="region of interest" description="Disordered" evidence="3">
    <location>
        <begin position="1812"/>
        <end position="1831"/>
    </location>
</feature>
<feature type="region of interest" description="Required for nuclear localization" evidence="1">
    <location>
        <begin position="2409"/>
        <end position="3902"/>
    </location>
</feature>
<feature type="region of interest" description="Disordered" evidence="3">
    <location>
        <begin position="2463"/>
        <end position="2675"/>
    </location>
</feature>
<feature type="region of interest" description="Disordered" evidence="3">
    <location>
        <begin position="2719"/>
        <end position="2771"/>
    </location>
</feature>
<feature type="region of interest" description="Disordered" evidence="3">
    <location>
        <begin position="2876"/>
        <end position="3151"/>
    </location>
</feature>
<feature type="region of interest" description="Disordered" evidence="3">
    <location>
        <begin position="3195"/>
        <end position="3549"/>
    </location>
</feature>
<feature type="region of interest" description="Disordered" evidence="3">
    <location>
        <begin position="3563"/>
        <end position="3902"/>
    </location>
</feature>
<feature type="coiled-coil region" evidence="2">
    <location>
        <begin position="2480"/>
        <end position="2526"/>
    </location>
</feature>
<feature type="compositionally biased region" description="Acidic residues" evidence="3">
    <location>
        <begin position="420"/>
        <end position="430"/>
    </location>
</feature>
<feature type="compositionally biased region" description="Pro residues" evidence="3">
    <location>
        <begin position="709"/>
        <end position="721"/>
    </location>
</feature>
<feature type="compositionally biased region" description="Basic and acidic residues" evidence="3">
    <location>
        <begin position="740"/>
        <end position="802"/>
    </location>
</feature>
<feature type="compositionally biased region" description="Basic and acidic residues" evidence="3">
    <location>
        <begin position="912"/>
        <end position="928"/>
    </location>
</feature>
<feature type="compositionally biased region" description="Basic and acidic residues" evidence="3">
    <location>
        <begin position="977"/>
        <end position="1004"/>
    </location>
</feature>
<feature type="compositionally biased region" description="Basic and acidic residues" evidence="3">
    <location>
        <begin position="1018"/>
        <end position="1027"/>
    </location>
</feature>
<feature type="compositionally biased region" description="Basic residues" evidence="3">
    <location>
        <begin position="1812"/>
        <end position="1824"/>
    </location>
</feature>
<feature type="compositionally biased region" description="Basic and acidic residues" evidence="3">
    <location>
        <begin position="2474"/>
        <end position="2547"/>
    </location>
</feature>
<feature type="compositionally biased region" description="Low complexity" evidence="3">
    <location>
        <begin position="2548"/>
        <end position="2566"/>
    </location>
</feature>
<feature type="compositionally biased region" description="Low complexity" evidence="3">
    <location>
        <begin position="2614"/>
        <end position="2632"/>
    </location>
</feature>
<feature type="compositionally biased region" description="Low complexity" evidence="3">
    <location>
        <begin position="2734"/>
        <end position="2748"/>
    </location>
</feature>
<feature type="compositionally biased region" description="Basic and acidic residues" evidence="3">
    <location>
        <begin position="2876"/>
        <end position="2979"/>
    </location>
</feature>
<feature type="compositionally biased region" description="Low complexity" evidence="3">
    <location>
        <begin position="2980"/>
        <end position="3001"/>
    </location>
</feature>
<feature type="compositionally biased region" description="Low complexity" evidence="3">
    <location>
        <begin position="3010"/>
        <end position="3143"/>
    </location>
</feature>
<feature type="compositionally biased region" description="Low complexity" evidence="3">
    <location>
        <begin position="3196"/>
        <end position="3205"/>
    </location>
</feature>
<feature type="compositionally biased region" description="Low complexity" evidence="3">
    <location>
        <begin position="3226"/>
        <end position="3236"/>
    </location>
</feature>
<feature type="compositionally biased region" description="Polar residues" evidence="3">
    <location>
        <begin position="3237"/>
        <end position="3248"/>
    </location>
</feature>
<feature type="compositionally biased region" description="Low complexity" evidence="3">
    <location>
        <begin position="3250"/>
        <end position="3275"/>
    </location>
</feature>
<feature type="compositionally biased region" description="Low complexity" evidence="3">
    <location>
        <begin position="3284"/>
        <end position="3295"/>
    </location>
</feature>
<feature type="compositionally biased region" description="Low complexity" evidence="3">
    <location>
        <begin position="3317"/>
        <end position="3389"/>
    </location>
</feature>
<feature type="compositionally biased region" description="Polar residues" evidence="3">
    <location>
        <begin position="3391"/>
        <end position="3409"/>
    </location>
</feature>
<feature type="compositionally biased region" description="Low complexity" evidence="3">
    <location>
        <begin position="3410"/>
        <end position="3446"/>
    </location>
</feature>
<feature type="compositionally biased region" description="Low complexity" evidence="3">
    <location>
        <begin position="3454"/>
        <end position="3539"/>
    </location>
</feature>
<feature type="compositionally biased region" description="Low complexity" evidence="3">
    <location>
        <begin position="3570"/>
        <end position="3619"/>
    </location>
</feature>
<feature type="compositionally biased region" description="Gly residues" evidence="3">
    <location>
        <begin position="3620"/>
        <end position="3649"/>
    </location>
</feature>
<feature type="compositionally biased region" description="Low complexity" evidence="3">
    <location>
        <begin position="3663"/>
        <end position="3700"/>
    </location>
</feature>
<feature type="compositionally biased region" description="Low complexity" evidence="3">
    <location>
        <begin position="3710"/>
        <end position="3742"/>
    </location>
</feature>
<feature type="compositionally biased region" description="Low complexity" evidence="3">
    <location>
        <begin position="3760"/>
        <end position="3830"/>
    </location>
</feature>
<feature type="compositionally biased region" description="Gly residues" evidence="3">
    <location>
        <begin position="3831"/>
        <end position="3841"/>
    </location>
</feature>
<feature type="compositionally biased region" description="Low complexity" evidence="3">
    <location>
        <begin position="3842"/>
        <end position="3888"/>
    </location>
</feature>
<feature type="compositionally biased region" description="Polar residues" evidence="3">
    <location>
        <begin position="3889"/>
        <end position="3902"/>
    </location>
</feature>
<evidence type="ECO:0000250" key="1"/>
<evidence type="ECO:0000255" key="2"/>
<evidence type="ECO:0000256" key="3">
    <source>
        <dbReference type="SAM" id="MobiDB-lite"/>
    </source>
</evidence>
<evidence type="ECO:0000305" key="4"/>
<reference key="1">
    <citation type="journal article" date="2003" name="PLoS Biol.">
        <title>The genome sequence of Caenorhabditis briggsae: a platform for comparative genomics.</title>
        <authorList>
            <person name="Stein L.D."/>
            <person name="Bao Z."/>
            <person name="Blasiar D."/>
            <person name="Blumenthal T."/>
            <person name="Brent M.R."/>
            <person name="Chen N."/>
            <person name="Chinwalla A."/>
            <person name="Clarke L."/>
            <person name="Clee C."/>
            <person name="Coghlan A."/>
            <person name="Coulson A."/>
            <person name="D'Eustachio P."/>
            <person name="Fitch D.H.A."/>
            <person name="Fulton L.A."/>
            <person name="Fulton R.E."/>
            <person name="Griffiths-Jones S."/>
            <person name="Harris T.W."/>
            <person name="Hillier L.W."/>
            <person name="Kamath R."/>
            <person name="Kuwabara P.E."/>
            <person name="Mardis E.R."/>
            <person name="Marra M.A."/>
            <person name="Miner T.L."/>
            <person name="Minx P."/>
            <person name="Mullikin J.C."/>
            <person name="Plumb R.W."/>
            <person name="Rogers J."/>
            <person name="Schein J.E."/>
            <person name="Sohrmann M."/>
            <person name="Spieth J."/>
            <person name="Stajich J.E."/>
            <person name="Wei C."/>
            <person name="Willey D."/>
            <person name="Wilson R.K."/>
            <person name="Durbin R.M."/>
            <person name="Waterston R.H."/>
        </authorList>
    </citation>
    <scope>NUCLEOTIDE SEQUENCE [LARGE SCALE GENOMIC DNA]</scope>
    <source>
        <strain>AF16</strain>
    </source>
</reference>
<accession>P0C656</accession>
<accession>A8WRJ1</accession>
<dbReference type="EMBL" id="HE601451">
    <property type="protein sequence ID" value="CAP23099.3"/>
    <property type="molecule type" value="Genomic_DNA"/>
</dbReference>
<dbReference type="SMR" id="P0C656"/>
<dbReference type="FunCoup" id="P0C656">
    <property type="interactions" value="2239"/>
</dbReference>
<dbReference type="STRING" id="6238.P0C656"/>
<dbReference type="WormBase" id="CBG01900">
    <property type="protein sequence ID" value="CBP45864"/>
    <property type="gene ID" value="WBGene00025069"/>
    <property type="gene designation" value="Cbr-dpy-22"/>
</dbReference>
<dbReference type="eggNOG" id="KOG0018">
    <property type="taxonomic scope" value="Eukaryota"/>
</dbReference>
<dbReference type="eggNOG" id="KOG3598">
    <property type="taxonomic scope" value="Eukaryota"/>
</dbReference>
<dbReference type="HOGENOM" id="CLU_000287_0_0_1"/>
<dbReference type="InParanoid" id="P0C656"/>
<dbReference type="OMA" id="ICEQDWV"/>
<dbReference type="Proteomes" id="UP000008549">
    <property type="component" value="Unassembled WGS sequence"/>
</dbReference>
<dbReference type="GO" id="GO:0016592">
    <property type="term" value="C:mediator complex"/>
    <property type="evidence" value="ECO:0000318"/>
    <property type="project" value="GO_Central"/>
</dbReference>
<dbReference type="GO" id="GO:0003713">
    <property type="term" value="F:transcription coactivator activity"/>
    <property type="evidence" value="ECO:0000318"/>
    <property type="project" value="GO_Central"/>
</dbReference>
<dbReference type="GO" id="GO:0045944">
    <property type="term" value="P:positive regulation of transcription by RNA polymerase II"/>
    <property type="evidence" value="ECO:0000318"/>
    <property type="project" value="GO_Central"/>
</dbReference>
<dbReference type="InterPro" id="IPR051647">
    <property type="entry name" value="Mediator_comp_sub12"/>
</dbReference>
<dbReference type="InterPro" id="IPR019035">
    <property type="entry name" value="Mediator_Med12"/>
</dbReference>
<dbReference type="InterPro" id="IPR021990">
    <property type="entry name" value="Mediator_Med12_LCEWAV"/>
</dbReference>
<dbReference type="PANTHER" id="PTHR46007">
    <property type="entry name" value="MEDIATOR OF RNA POLYMERASE II TRANSCRIPTION SUBUNIT 12"/>
    <property type="match status" value="1"/>
</dbReference>
<dbReference type="PANTHER" id="PTHR46007:SF7">
    <property type="entry name" value="MEDIATOR OF RNA POLYMERASE II TRANSCRIPTION SUBUNIT 12"/>
    <property type="match status" value="1"/>
</dbReference>
<dbReference type="Pfam" id="PF09497">
    <property type="entry name" value="Med12"/>
    <property type="match status" value="1"/>
</dbReference>
<dbReference type="Pfam" id="PF12145">
    <property type="entry name" value="Med12-LCEWAV"/>
    <property type="match status" value="1"/>
</dbReference>
<dbReference type="SMART" id="SM01281">
    <property type="entry name" value="Med12"/>
    <property type="match status" value="1"/>
</dbReference>
<protein>
    <recommendedName>
        <fullName>Mediator of RNA polymerase II transcription subunit 12</fullName>
    </recommendedName>
    <alternativeName>
        <fullName>Mediator complex subunit 12</fullName>
    </alternativeName>
    <alternativeName>
        <fullName>Protein dumpy-22</fullName>
    </alternativeName>
</protein>
<gene>
    <name type="primary">dpy-22</name>
    <name type="synonym">mdt-12</name>
    <name type="ORF">CBG01900</name>
</gene>
<comment type="function">
    <text evidence="1">Component of the Mediator complex, a coactivator involved in regulated gene transcription of nearly all RNA polymerase II-dependent genes. Mediator functions as a bridge to convey information from gene-specific regulatory proteins to the basal RNA polymerase II transcription machinery. Mediator is recruited to promoters by direct interactions with regulatory proteins and serves as a scaffold for the assembly of a functional preinitiation complex with RNA polymerase II and the general transcription factors (By similarity).</text>
</comment>
<comment type="subunit">
    <text evidence="1">Component of the Mediator complex.</text>
</comment>
<comment type="subcellular location">
    <subcellularLocation>
        <location evidence="1">Nucleus</location>
    </subcellularLocation>
</comment>
<comment type="similarity">
    <text evidence="4">Belongs to the Mediator complex subunit 12 family.</text>
</comment>